<organism>
    <name type="scientific">Albidiferax ferrireducens (strain ATCC BAA-621 / DSM 15236 / T118)</name>
    <name type="common">Rhodoferax ferrireducens</name>
    <dbReference type="NCBI Taxonomy" id="338969"/>
    <lineage>
        <taxon>Bacteria</taxon>
        <taxon>Pseudomonadati</taxon>
        <taxon>Pseudomonadota</taxon>
        <taxon>Betaproteobacteria</taxon>
        <taxon>Burkholderiales</taxon>
        <taxon>Comamonadaceae</taxon>
        <taxon>Rhodoferax</taxon>
    </lineage>
</organism>
<evidence type="ECO:0000255" key="1">
    <source>
        <dbReference type="HAMAP-Rule" id="MF_00099"/>
    </source>
</evidence>
<keyword id="KW-0145">Chemotaxis</keyword>
<keyword id="KW-0963">Cytoplasm</keyword>
<keyword id="KW-0378">Hydrolase</keyword>
<keyword id="KW-0597">Phosphoprotein</keyword>
<keyword id="KW-1185">Reference proteome</keyword>
<accession>Q221I1</accession>
<dbReference type="EC" id="3.1.1.61" evidence="1"/>
<dbReference type="EC" id="3.5.1.44" evidence="1"/>
<dbReference type="EMBL" id="CP000267">
    <property type="protein sequence ID" value="ABD68322.1"/>
    <property type="molecule type" value="Genomic_DNA"/>
</dbReference>
<dbReference type="SMR" id="Q221I1"/>
<dbReference type="STRING" id="338969.Rfer_0571"/>
<dbReference type="KEGG" id="rfr:Rfer_0571"/>
<dbReference type="eggNOG" id="COG2201">
    <property type="taxonomic scope" value="Bacteria"/>
</dbReference>
<dbReference type="HOGENOM" id="CLU_000445_51_0_4"/>
<dbReference type="Proteomes" id="UP000008332">
    <property type="component" value="Chromosome"/>
</dbReference>
<dbReference type="GO" id="GO:0005737">
    <property type="term" value="C:cytoplasm"/>
    <property type="evidence" value="ECO:0007669"/>
    <property type="project" value="UniProtKB-SubCell"/>
</dbReference>
<dbReference type="GO" id="GO:0000156">
    <property type="term" value="F:phosphorelay response regulator activity"/>
    <property type="evidence" value="ECO:0007669"/>
    <property type="project" value="InterPro"/>
</dbReference>
<dbReference type="GO" id="GO:0008984">
    <property type="term" value="F:protein-glutamate methylesterase activity"/>
    <property type="evidence" value="ECO:0007669"/>
    <property type="project" value="UniProtKB-UniRule"/>
</dbReference>
<dbReference type="GO" id="GO:0050568">
    <property type="term" value="F:protein-glutamine glutaminase activity"/>
    <property type="evidence" value="ECO:0007669"/>
    <property type="project" value="UniProtKB-UniRule"/>
</dbReference>
<dbReference type="GO" id="GO:0006935">
    <property type="term" value="P:chemotaxis"/>
    <property type="evidence" value="ECO:0007669"/>
    <property type="project" value="UniProtKB-UniRule"/>
</dbReference>
<dbReference type="CDD" id="cd16432">
    <property type="entry name" value="CheB_Rec"/>
    <property type="match status" value="1"/>
</dbReference>
<dbReference type="CDD" id="cd17541">
    <property type="entry name" value="REC_CheB-like"/>
    <property type="match status" value="1"/>
</dbReference>
<dbReference type="FunFam" id="3.40.50.2300:FF:000060">
    <property type="entry name" value="Protein-glutamate methylesterase/protein-glutamine glutaminase"/>
    <property type="match status" value="1"/>
</dbReference>
<dbReference type="Gene3D" id="3.40.50.2300">
    <property type="match status" value="1"/>
</dbReference>
<dbReference type="Gene3D" id="3.40.50.180">
    <property type="entry name" value="Methylesterase CheB, C-terminal domain"/>
    <property type="match status" value="1"/>
</dbReference>
<dbReference type="HAMAP" id="MF_00099">
    <property type="entry name" value="CheB_chemtxs"/>
    <property type="match status" value="1"/>
</dbReference>
<dbReference type="InterPro" id="IPR008248">
    <property type="entry name" value="CheB-like"/>
</dbReference>
<dbReference type="InterPro" id="IPR035909">
    <property type="entry name" value="CheB_C"/>
</dbReference>
<dbReference type="InterPro" id="IPR011006">
    <property type="entry name" value="CheY-like_superfamily"/>
</dbReference>
<dbReference type="InterPro" id="IPR000673">
    <property type="entry name" value="Sig_transdc_resp-reg_Me-estase"/>
</dbReference>
<dbReference type="InterPro" id="IPR001789">
    <property type="entry name" value="Sig_transdc_resp-reg_receiver"/>
</dbReference>
<dbReference type="NCBIfam" id="NF001965">
    <property type="entry name" value="PRK00742.1"/>
    <property type="match status" value="1"/>
</dbReference>
<dbReference type="NCBIfam" id="NF009206">
    <property type="entry name" value="PRK12555.1"/>
    <property type="match status" value="1"/>
</dbReference>
<dbReference type="PANTHER" id="PTHR42872">
    <property type="entry name" value="PROTEIN-GLUTAMATE METHYLESTERASE/PROTEIN-GLUTAMINE GLUTAMINASE"/>
    <property type="match status" value="1"/>
</dbReference>
<dbReference type="PANTHER" id="PTHR42872:SF6">
    <property type="entry name" value="PROTEIN-GLUTAMATE METHYLESTERASE_PROTEIN-GLUTAMINE GLUTAMINASE"/>
    <property type="match status" value="1"/>
</dbReference>
<dbReference type="Pfam" id="PF01339">
    <property type="entry name" value="CheB_methylest"/>
    <property type="match status" value="1"/>
</dbReference>
<dbReference type="Pfam" id="PF00072">
    <property type="entry name" value="Response_reg"/>
    <property type="match status" value="1"/>
</dbReference>
<dbReference type="PIRSF" id="PIRSF000876">
    <property type="entry name" value="RR_chemtxs_CheB"/>
    <property type="match status" value="1"/>
</dbReference>
<dbReference type="SMART" id="SM00448">
    <property type="entry name" value="REC"/>
    <property type="match status" value="1"/>
</dbReference>
<dbReference type="SUPFAM" id="SSF52172">
    <property type="entry name" value="CheY-like"/>
    <property type="match status" value="1"/>
</dbReference>
<dbReference type="SUPFAM" id="SSF52738">
    <property type="entry name" value="Methylesterase CheB, C-terminal domain"/>
    <property type="match status" value="1"/>
</dbReference>
<dbReference type="PROSITE" id="PS50122">
    <property type="entry name" value="CHEB"/>
    <property type="match status" value="1"/>
</dbReference>
<dbReference type="PROSITE" id="PS50110">
    <property type="entry name" value="RESPONSE_REGULATORY"/>
    <property type="match status" value="1"/>
</dbReference>
<protein>
    <recommendedName>
        <fullName evidence="1">Protein-glutamate methylesterase/protein-glutamine glutaminase 1</fullName>
        <ecNumber evidence="1">3.1.1.61</ecNumber>
        <ecNumber evidence="1">3.5.1.44</ecNumber>
    </recommendedName>
</protein>
<gene>
    <name evidence="1" type="primary">cheB1</name>
    <name type="ordered locus">Rfer_0571</name>
</gene>
<feature type="chain" id="PRO_0000264304" description="Protein-glutamate methylesterase/protein-glutamine glutaminase 1">
    <location>
        <begin position="1"/>
        <end position="373"/>
    </location>
</feature>
<feature type="domain" description="Response regulatory" evidence="1">
    <location>
        <begin position="16"/>
        <end position="133"/>
    </location>
</feature>
<feature type="domain" description="CheB-type methylesterase" evidence="1">
    <location>
        <begin position="175"/>
        <end position="367"/>
    </location>
</feature>
<feature type="active site" evidence="1">
    <location>
        <position position="187"/>
    </location>
</feature>
<feature type="active site" evidence="1">
    <location>
        <position position="213"/>
    </location>
</feature>
<feature type="active site" evidence="1">
    <location>
        <position position="309"/>
    </location>
</feature>
<feature type="modified residue" description="4-aspartylphosphate" evidence="1">
    <location>
        <position position="67"/>
    </location>
</feature>
<proteinExistence type="inferred from homology"/>
<reference key="1">
    <citation type="submission" date="2006-02" db="EMBL/GenBank/DDBJ databases">
        <title>Complete sequence of chromosome of Rhodoferax ferrireducens DSM 15236.</title>
        <authorList>
            <person name="Copeland A."/>
            <person name="Lucas S."/>
            <person name="Lapidus A."/>
            <person name="Barry K."/>
            <person name="Detter J.C."/>
            <person name="Glavina del Rio T."/>
            <person name="Hammon N."/>
            <person name="Israni S."/>
            <person name="Pitluck S."/>
            <person name="Brettin T."/>
            <person name="Bruce D."/>
            <person name="Han C."/>
            <person name="Tapia R."/>
            <person name="Gilna P."/>
            <person name="Kiss H."/>
            <person name="Schmutz J."/>
            <person name="Larimer F."/>
            <person name="Land M."/>
            <person name="Kyrpides N."/>
            <person name="Ivanova N."/>
            <person name="Richardson P."/>
        </authorList>
    </citation>
    <scope>NUCLEOTIDE SEQUENCE [LARGE SCALE GENOMIC DNA]</scope>
    <source>
        <strain>ATCC BAA-621 / DSM 15236 / T118</strain>
    </source>
</reference>
<name>CHEB1_ALBFT</name>
<comment type="function">
    <text evidence="1">Involved in chemotaxis. Part of a chemotaxis signal transduction system that modulates chemotaxis in response to various stimuli. Catalyzes the demethylation of specific methylglutamate residues introduced into the chemoreceptors (methyl-accepting chemotaxis proteins or MCP) by CheR. Also mediates the irreversible deamidation of specific glutamine residues to glutamic acid.</text>
</comment>
<comment type="catalytic activity">
    <reaction evidence="1">
        <text>[protein]-L-glutamate 5-O-methyl ester + H2O = L-glutamyl-[protein] + methanol + H(+)</text>
        <dbReference type="Rhea" id="RHEA:23236"/>
        <dbReference type="Rhea" id="RHEA-COMP:10208"/>
        <dbReference type="Rhea" id="RHEA-COMP:10311"/>
        <dbReference type="ChEBI" id="CHEBI:15377"/>
        <dbReference type="ChEBI" id="CHEBI:15378"/>
        <dbReference type="ChEBI" id="CHEBI:17790"/>
        <dbReference type="ChEBI" id="CHEBI:29973"/>
        <dbReference type="ChEBI" id="CHEBI:82795"/>
        <dbReference type="EC" id="3.1.1.61"/>
    </reaction>
</comment>
<comment type="catalytic activity">
    <reaction evidence="1">
        <text>L-glutaminyl-[protein] + H2O = L-glutamyl-[protein] + NH4(+)</text>
        <dbReference type="Rhea" id="RHEA:16441"/>
        <dbReference type="Rhea" id="RHEA-COMP:10207"/>
        <dbReference type="Rhea" id="RHEA-COMP:10208"/>
        <dbReference type="ChEBI" id="CHEBI:15377"/>
        <dbReference type="ChEBI" id="CHEBI:28938"/>
        <dbReference type="ChEBI" id="CHEBI:29973"/>
        <dbReference type="ChEBI" id="CHEBI:30011"/>
        <dbReference type="EC" id="3.5.1.44"/>
    </reaction>
</comment>
<comment type="subcellular location">
    <subcellularLocation>
        <location evidence="1">Cytoplasm</location>
    </subcellularLocation>
</comment>
<comment type="domain">
    <text evidence="1">Contains a C-terminal catalytic domain, and an N-terminal region which modulates catalytic activity.</text>
</comment>
<comment type="PTM">
    <text evidence="1">Phosphorylated by CheA. Phosphorylation of the N-terminal regulatory domain activates the methylesterase activity.</text>
</comment>
<comment type="similarity">
    <text evidence="1">Belongs to the CheB family.</text>
</comment>
<sequence length="373" mass="39828">MARWICFEDIELKKIRVVVVDDSALVRSLLAEIINRQKDMECVGTANDPLIAREMIRELNPDVLTLDIEMPRMDGIDFLGRLMRLRPMPVVMVSTLTERGAEITMKALELGAIDFVAKPRIGVASGLTELSDQIVEKVRIAATAHVRRAPAVPAAATPAVGGAVGGHAPVASIGRVSTEKLICIGASTGGTEAIKEILTRLPADSPGIVITQHMPPGFTTSFAARLNSLCQIAVQEAVNGERILPGHAYIAPGGKQFRVSRSGANYVALVEDGELVNRHKPSVEVLFKSVASVVGRNAYGVMLTGMGNDGAKAMREMKDAGSYNFVQDEASCIVFGMPREAILHGAADEVLPLTAIAPALIAKLSSATDRYRV</sequence>